<dbReference type="EC" id="1.3.98.3" evidence="1"/>
<dbReference type="EMBL" id="U46781">
    <property type="protein sequence ID" value="AAC44662.1"/>
    <property type="molecule type" value="Genomic_DNA"/>
</dbReference>
<dbReference type="SMR" id="P95506"/>
<dbReference type="STRING" id="75985.WC39_04955"/>
<dbReference type="UniPathway" id="UPA00251">
    <property type="reaction ID" value="UER00323"/>
</dbReference>
<dbReference type="GO" id="GO:0005737">
    <property type="term" value="C:cytoplasm"/>
    <property type="evidence" value="ECO:0000250"/>
    <property type="project" value="UniProtKB"/>
</dbReference>
<dbReference type="GO" id="GO:0051539">
    <property type="term" value="F:4 iron, 4 sulfur cluster binding"/>
    <property type="evidence" value="ECO:0000250"/>
    <property type="project" value="UniProtKB"/>
</dbReference>
<dbReference type="GO" id="GO:0051989">
    <property type="term" value="F:coproporphyrinogen dehydrogenase activity"/>
    <property type="evidence" value="ECO:0000250"/>
    <property type="project" value="UniProtKB"/>
</dbReference>
<dbReference type="GO" id="GO:0046872">
    <property type="term" value="F:metal ion binding"/>
    <property type="evidence" value="ECO:0007669"/>
    <property type="project" value="UniProtKB-KW"/>
</dbReference>
<dbReference type="GO" id="GO:0006779">
    <property type="term" value="P:porphyrin-containing compound biosynthetic process"/>
    <property type="evidence" value="ECO:0000250"/>
    <property type="project" value="UniProtKB"/>
</dbReference>
<dbReference type="GO" id="GO:0006782">
    <property type="term" value="P:protoporphyrinogen IX biosynthetic process"/>
    <property type="evidence" value="ECO:0000250"/>
    <property type="project" value="UniProtKB"/>
</dbReference>
<dbReference type="InterPro" id="IPR034505">
    <property type="entry name" value="Coproporphyrinogen-III_oxidase"/>
</dbReference>
<dbReference type="PANTHER" id="PTHR13932">
    <property type="entry name" value="COPROPORPHYRINIGEN III OXIDASE"/>
    <property type="match status" value="1"/>
</dbReference>
<dbReference type="PANTHER" id="PTHR13932:SF6">
    <property type="entry name" value="OXYGEN-INDEPENDENT COPROPORPHYRINOGEN III OXIDASE"/>
    <property type="match status" value="1"/>
</dbReference>
<dbReference type="SUPFAM" id="SSF102114">
    <property type="entry name" value="Radical SAM enzymes"/>
    <property type="match status" value="1"/>
</dbReference>
<evidence type="ECO:0000250" key="1">
    <source>
        <dbReference type="UniProtKB" id="P32131"/>
    </source>
</evidence>
<evidence type="ECO:0000305" key="2"/>
<gene>
    <name type="primary">hemN</name>
</gene>
<sequence length="146" mass="17351">MSEIIWDLALIQKYNHSGPRYTSYPTALEFNENYTNEDFIRAAARYPERPLSLYVHIPFCHKLCYFCGCNKVITRHRHKVEIYLDYLEREIKTRAPLFQNRLVTQIHWGRGTPTYLDEDQSARLMQMLRANFDVSDDAEISIEMDP</sequence>
<feature type="chain" id="PRO_0000109946" description="Oxygen-independent coproporphyrinogen III oxidase">
    <location>
        <begin position="1"/>
        <end position="146" status="greater than"/>
    </location>
</feature>
<feature type="binding site" evidence="1">
    <location>
        <position position="54"/>
    </location>
    <ligand>
        <name>S-adenosyl-L-methionine</name>
        <dbReference type="ChEBI" id="CHEBI:59789"/>
        <label>1</label>
    </ligand>
</feature>
<feature type="binding site" evidence="1">
    <location>
        <position position="60"/>
    </location>
    <ligand>
        <name>[4Fe-4S] cluster</name>
        <dbReference type="ChEBI" id="CHEBI:49883"/>
        <note>4Fe-4S-S-AdoMet</note>
    </ligand>
</feature>
<feature type="binding site" evidence="1">
    <location>
        <position position="64"/>
    </location>
    <ligand>
        <name>[4Fe-4S] cluster</name>
        <dbReference type="ChEBI" id="CHEBI:49883"/>
        <note>4Fe-4S-S-AdoMet</note>
    </ligand>
</feature>
<feature type="binding site" evidence="1">
    <location>
        <position position="66"/>
    </location>
    <ligand>
        <name>S-adenosyl-L-methionine</name>
        <dbReference type="ChEBI" id="CHEBI:59789"/>
        <label>2</label>
    </ligand>
</feature>
<feature type="binding site" evidence="1">
    <location>
        <position position="67"/>
    </location>
    <ligand>
        <name>[4Fe-4S] cluster</name>
        <dbReference type="ChEBI" id="CHEBI:49883"/>
        <note>4Fe-4S-S-AdoMet</note>
    </ligand>
</feature>
<feature type="binding site" evidence="1">
    <location>
        <begin position="111"/>
        <end position="112"/>
    </location>
    <ligand>
        <name>S-adenosyl-L-methionine</name>
        <dbReference type="ChEBI" id="CHEBI:59789"/>
        <label>2</label>
    </ligand>
</feature>
<feature type="binding site" evidence="1">
    <location>
        <position position="143"/>
    </location>
    <ligand>
        <name>S-adenosyl-L-methionine</name>
        <dbReference type="ChEBI" id="CHEBI:59789"/>
        <label>1</label>
    </ligand>
</feature>
<feature type="non-terminal residue">
    <location>
        <position position="146"/>
    </location>
</feature>
<accession>P95506</accession>
<proteinExistence type="inferred from homology"/>
<protein>
    <recommendedName>
        <fullName>Oxygen-independent coproporphyrinogen III oxidase</fullName>
        <shortName>CPO</shortName>
        <ecNumber evidence="1">1.3.98.3</ecNumber>
    </recommendedName>
    <alternativeName>
        <fullName>Coproporphyrinogen III dehydrogenase</fullName>
        <shortName>CPDH</shortName>
    </alternativeName>
</protein>
<keyword id="KW-0004">4Fe-4S</keyword>
<keyword id="KW-0963">Cytoplasm</keyword>
<keyword id="KW-0408">Iron</keyword>
<keyword id="KW-0411">Iron-sulfur</keyword>
<keyword id="KW-0479">Metal-binding</keyword>
<keyword id="KW-0560">Oxidoreductase</keyword>
<keyword id="KW-0627">Porphyrin biosynthesis</keyword>
<keyword id="KW-0949">S-adenosyl-L-methionine</keyword>
<comment type="function">
    <text evidence="1">Involved in the heme biosynthesis. Catalyzes the anaerobic oxidative decarboxylation of propionate groups of rings A and B of coproporphyrinogen III to yield the vinyl groups in protoporphyrinogen IX.</text>
</comment>
<comment type="catalytic activity">
    <reaction evidence="1">
        <text>coproporphyrinogen III + 2 S-adenosyl-L-methionine = protoporphyrinogen IX + 2 5'-deoxyadenosine + 2 L-methionine + 2 CO2</text>
        <dbReference type="Rhea" id="RHEA:15425"/>
        <dbReference type="ChEBI" id="CHEBI:16526"/>
        <dbReference type="ChEBI" id="CHEBI:17319"/>
        <dbReference type="ChEBI" id="CHEBI:57307"/>
        <dbReference type="ChEBI" id="CHEBI:57309"/>
        <dbReference type="ChEBI" id="CHEBI:57844"/>
        <dbReference type="ChEBI" id="CHEBI:59789"/>
        <dbReference type="EC" id="1.3.98.3"/>
    </reaction>
</comment>
<comment type="cofactor">
    <cofactor evidence="1">
        <name>[4Fe-4S] cluster</name>
        <dbReference type="ChEBI" id="CHEBI:49883"/>
    </cofactor>
    <text evidence="1">Binds 1 [4Fe-4S] cluster. The cluster is coordinated with 3 cysteines and an exchangeable S-adenosyl-L-methionine.</text>
</comment>
<comment type="pathway">
    <text>Porphyrin-containing compound metabolism; protoporphyrin-IX biosynthesis; protoporphyrinogen-IX from coproporphyrinogen-III (AdoMet route): step 1/1.</text>
</comment>
<comment type="subunit">
    <text evidence="1">Monomer.</text>
</comment>
<comment type="subcellular location">
    <subcellularLocation>
        <location evidence="1">Cytoplasm</location>
    </subcellularLocation>
</comment>
<comment type="similarity">
    <text evidence="2">Belongs to the anaerobic coproporphyrinogen-III oxidase family.</text>
</comment>
<name>HEMN_MANHA</name>
<reference key="1">
    <citation type="journal article" date="1996" name="Gene">
        <title>The restriction-modification system of Pasteurella haemolytica is a member of a new family of type I enzymes.</title>
        <authorList>
            <person name="Highlander S.K."/>
            <person name="Garza O."/>
        </authorList>
    </citation>
    <scope>NUCLEOTIDE SEQUENCE [GENOMIC DNA]</scope>
    <source>
        <strain>Serotype A1 / PH101</strain>
    </source>
</reference>
<organism>
    <name type="scientific">Mannheimia haemolytica</name>
    <name type="common">Pasteurella haemolytica</name>
    <dbReference type="NCBI Taxonomy" id="75985"/>
    <lineage>
        <taxon>Bacteria</taxon>
        <taxon>Pseudomonadati</taxon>
        <taxon>Pseudomonadota</taxon>
        <taxon>Gammaproteobacteria</taxon>
        <taxon>Pasteurellales</taxon>
        <taxon>Pasteurellaceae</taxon>
        <taxon>Mannheimia</taxon>
    </lineage>
</organism>